<name>RL6_FERNB</name>
<protein>
    <recommendedName>
        <fullName evidence="1">Large ribosomal subunit protein uL6</fullName>
    </recommendedName>
    <alternativeName>
        <fullName evidence="2">50S ribosomal protein L6</fullName>
    </alternativeName>
</protein>
<gene>
    <name evidence="1" type="primary">rplF</name>
    <name type="ordered locus">Fnod_1123</name>
</gene>
<sequence length="184" mass="20644">MSRIAKKPIVLPTNVQLSITDSEIKVKGPKGELKLNNHPFVSIKVEGNEVWVTPNLEVAKRKADERKFKAMVGTYWRLIRNMVLGVTEGFKKELEIVGVGYRAQLQGNKLIMNLGYAHQVEFDVPADVKVEVPAPNKIIVSGIDKQRVGQVAADIRKWREPNPYSGKGIKYVDEVLKLKEGKKA</sequence>
<feature type="chain" id="PRO_1000073403" description="Large ribosomal subunit protein uL6">
    <location>
        <begin position="1"/>
        <end position="184"/>
    </location>
</feature>
<comment type="function">
    <text evidence="1">This protein binds to the 23S rRNA, and is important in its secondary structure. It is located near the subunit interface in the base of the L7/L12 stalk, and near the tRNA binding site of the peptidyltransferase center.</text>
</comment>
<comment type="subunit">
    <text evidence="1">Part of the 50S ribosomal subunit.</text>
</comment>
<comment type="similarity">
    <text evidence="1">Belongs to the universal ribosomal protein uL6 family.</text>
</comment>
<evidence type="ECO:0000255" key="1">
    <source>
        <dbReference type="HAMAP-Rule" id="MF_01365"/>
    </source>
</evidence>
<evidence type="ECO:0000305" key="2"/>
<dbReference type="EMBL" id="CP000771">
    <property type="protein sequence ID" value="ABS60970.1"/>
    <property type="molecule type" value="Genomic_DNA"/>
</dbReference>
<dbReference type="RefSeq" id="WP_011994283.1">
    <property type="nucleotide sequence ID" value="NC_009718.1"/>
</dbReference>
<dbReference type="SMR" id="A7HM37"/>
<dbReference type="STRING" id="381764.Fnod_1123"/>
<dbReference type="KEGG" id="fno:Fnod_1123"/>
<dbReference type="eggNOG" id="COG0097">
    <property type="taxonomic scope" value="Bacteria"/>
</dbReference>
<dbReference type="HOGENOM" id="CLU_065464_1_2_0"/>
<dbReference type="OrthoDB" id="9805007at2"/>
<dbReference type="Proteomes" id="UP000002415">
    <property type="component" value="Chromosome"/>
</dbReference>
<dbReference type="GO" id="GO:0022625">
    <property type="term" value="C:cytosolic large ribosomal subunit"/>
    <property type="evidence" value="ECO:0007669"/>
    <property type="project" value="TreeGrafter"/>
</dbReference>
<dbReference type="GO" id="GO:0019843">
    <property type="term" value="F:rRNA binding"/>
    <property type="evidence" value="ECO:0007669"/>
    <property type="project" value="UniProtKB-UniRule"/>
</dbReference>
<dbReference type="GO" id="GO:0003735">
    <property type="term" value="F:structural constituent of ribosome"/>
    <property type="evidence" value="ECO:0007669"/>
    <property type="project" value="InterPro"/>
</dbReference>
<dbReference type="GO" id="GO:0002181">
    <property type="term" value="P:cytoplasmic translation"/>
    <property type="evidence" value="ECO:0007669"/>
    <property type="project" value="TreeGrafter"/>
</dbReference>
<dbReference type="FunFam" id="3.90.930.12:FF:000001">
    <property type="entry name" value="50S ribosomal protein L6"/>
    <property type="match status" value="1"/>
</dbReference>
<dbReference type="FunFam" id="3.90.930.12:FF:000002">
    <property type="entry name" value="50S ribosomal protein L6"/>
    <property type="match status" value="1"/>
</dbReference>
<dbReference type="Gene3D" id="3.90.930.12">
    <property type="entry name" value="Ribosomal protein L6, alpha-beta domain"/>
    <property type="match status" value="2"/>
</dbReference>
<dbReference type="HAMAP" id="MF_01365_B">
    <property type="entry name" value="Ribosomal_uL6_B"/>
    <property type="match status" value="1"/>
</dbReference>
<dbReference type="InterPro" id="IPR000702">
    <property type="entry name" value="Ribosomal_uL6-like"/>
</dbReference>
<dbReference type="InterPro" id="IPR036789">
    <property type="entry name" value="Ribosomal_uL6-like_a/b-dom_sf"/>
</dbReference>
<dbReference type="InterPro" id="IPR020040">
    <property type="entry name" value="Ribosomal_uL6_a/b-dom"/>
</dbReference>
<dbReference type="InterPro" id="IPR019906">
    <property type="entry name" value="Ribosomal_uL6_bac-type"/>
</dbReference>
<dbReference type="NCBIfam" id="TIGR03654">
    <property type="entry name" value="L6_bact"/>
    <property type="match status" value="1"/>
</dbReference>
<dbReference type="PANTHER" id="PTHR11655">
    <property type="entry name" value="60S/50S RIBOSOMAL PROTEIN L6/L9"/>
    <property type="match status" value="1"/>
</dbReference>
<dbReference type="PANTHER" id="PTHR11655:SF14">
    <property type="entry name" value="LARGE RIBOSOMAL SUBUNIT PROTEIN UL6M"/>
    <property type="match status" value="1"/>
</dbReference>
<dbReference type="Pfam" id="PF00347">
    <property type="entry name" value="Ribosomal_L6"/>
    <property type="match status" value="2"/>
</dbReference>
<dbReference type="PIRSF" id="PIRSF002162">
    <property type="entry name" value="Ribosomal_L6"/>
    <property type="match status" value="1"/>
</dbReference>
<dbReference type="PRINTS" id="PR00059">
    <property type="entry name" value="RIBOSOMALL6"/>
</dbReference>
<dbReference type="SUPFAM" id="SSF56053">
    <property type="entry name" value="Ribosomal protein L6"/>
    <property type="match status" value="2"/>
</dbReference>
<proteinExistence type="inferred from homology"/>
<keyword id="KW-1185">Reference proteome</keyword>
<keyword id="KW-0687">Ribonucleoprotein</keyword>
<keyword id="KW-0689">Ribosomal protein</keyword>
<keyword id="KW-0694">RNA-binding</keyword>
<keyword id="KW-0699">rRNA-binding</keyword>
<organism>
    <name type="scientific">Fervidobacterium nodosum (strain ATCC 35602 / DSM 5306 / Rt17-B1)</name>
    <dbReference type="NCBI Taxonomy" id="381764"/>
    <lineage>
        <taxon>Bacteria</taxon>
        <taxon>Thermotogati</taxon>
        <taxon>Thermotogota</taxon>
        <taxon>Thermotogae</taxon>
        <taxon>Thermotogales</taxon>
        <taxon>Fervidobacteriaceae</taxon>
        <taxon>Fervidobacterium</taxon>
    </lineage>
</organism>
<accession>A7HM37</accession>
<reference key="1">
    <citation type="submission" date="2007-07" db="EMBL/GenBank/DDBJ databases">
        <title>Complete sequence of Fervidobacterium nodosum Rt17-B1.</title>
        <authorList>
            <consortium name="US DOE Joint Genome Institute"/>
            <person name="Copeland A."/>
            <person name="Lucas S."/>
            <person name="Lapidus A."/>
            <person name="Barry K."/>
            <person name="Glavina del Rio T."/>
            <person name="Dalin E."/>
            <person name="Tice H."/>
            <person name="Pitluck S."/>
            <person name="Saunders E."/>
            <person name="Brettin T."/>
            <person name="Bruce D."/>
            <person name="Detter J.C."/>
            <person name="Han C."/>
            <person name="Schmutz J."/>
            <person name="Larimer F."/>
            <person name="Land M."/>
            <person name="Hauser L."/>
            <person name="Kyrpides N."/>
            <person name="Mikhailova N."/>
            <person name="Nelson K."/>
            <person name="Gogarten J.P."/>
            <person name="Noll K."/>
            <person name="Richardson P."/>
        </authorList>
    </citation>
    <scope>NUCLEOTIDE SEQUENCE [LARGE SCALE GENOMIC DNA]</scope>
    <source>
        <strain>ATCC 35602 / DSM 5306 / Rt17-B1</strain>
    </source>
</reference>